<comment type="function">
    <text evidence="1">Catalyzes the condensation of pantoate with beta-alanine in an ATP-dependent reaction via a pantoyl-adenylate intermediate.</text>
</comment>
<comment type="catalytic activity">
    <reaction evidence="1">
        <text>(R)-pantoate + beta-alanine + ATP = (R)-pantothenate + AMP + diphosphate + H(+)</text>
        <dbReference type="Rhea" id="RHEA:10912"/>
        <dbReference type="ChEBI" id="CHEBI:15378"/>
        <dbReference type="ChEBI" id="CHEBI:15980"/>
        <dbReference type="ChEBI" id="CHEBI:29032"/>
        <dbReference type="ChEBI" id="CHEBI:30616"/>
        <dbReference type="ChEBI" id="CHEBI:33019"/>
        <dbReference type="ChEBI" id="CHEBI:57966"/>
        <dbReference type="ChEBI" id="CHEBI:456215"/>
        <dbReference type="EC" id="6.3.2.1"/>
    </reaction>
</comment>
<comment type="pathway">
    <text evidence="1">Cofactor biosynthesis; (R)-pantothenate biosynthesis; (R)-pantothenate from (R)-pantoate and beta-alanine: step 1/1.</text>
</comment>
<comment type="subunit">
    <text evidence="1">Homodimer.</text>
</comment>
<comment type="subcellular location">
    <subcellularLocation>
        <location evidence="1">Cytoplasm</location>
    </subcellularLocation>
</comment>
<comment type="miscellaneous">
    <text evidence="1">The reaction proceeds by a bi uni uni bi ping pong mechanism.</text>
</comment>
<comment type="similarity">
    <text evidence="1">Belongs to the pantothenate synthetase family.</text>
</comment>
<dbReference type="EC" id="6.3.2.1" evidence="1"/>
<dbReference type="EMBL" id="CP000489">
    <property type="protein sequence ID" value="ABL69755.1"/>
    <property type="molecule type" value="Genomic_DNA"/>
</dbReference>
<dbReference type="RefSeq" id="WP_011747953.1">
    <property type="nucleotide sequence ID" value="NC_008686.1"/>
</dbReference>
<dbReference type="SMR" id="A1B2L1"/>
<dbReference type="STRING" id="318586.Pden_1658"/>
<dbReference type="EnsemblBacteria" id="ABL69755">
    <property type="protein sequence ID" value="ABL69755"/>
    <property type="gene ID" value="Pden_1658"/>
</dbReference>
<dbReference type="GeneID" id="93450050"/>
<dbReference type="KEGG" id="pde:Pden_1658"/>
<dbReference type="eggNOG" id="COG0414">
    <property type="taxonomic scope" value="Bacteria"/>
</dbReference>
<dbReference type="HOGENOM" id="CLU_047148_0_0_5"/>
<dbReference type="OrthoDB" id="9773087at2"/>
<dbReference type="UniPathway" id="UPA00028">
    <property type="reaction ID" value="UER00005"/>
</dbReference>
<dbReference type="Proteomes" id="UP000000361">
    <property type="component" value="Chromosome 1"/>
</dbReference>
<dbReference type="GO" id="GO:0005829">
    <property type="term" value="C:cytosol"/>
    <property type="evidence" value="ECO:0007669"/>
    <property type="project" value="TreeGrafter"/>
</dbReference>
<dbReference type="GO" id="GO:0005524">
    <property type="term" value="F:ATP binding"/>
    <property type="evidence" value="ECO:0007669"/>
    <property type="project" value="UniProtKB-KW"/>
</dbReference>
<dbReference type="GO" id="GO:0004592">
    <property type="term" value="F:pantoate-beta-alanine ligase activity"/>
    <property type="evidence" value="ECO:0007669"/>
    <property type="project" value="UniProtKB-UniRule"/>
</dbReference>
<dbReference type="GO" id="GO:0015940">
    <property type="term" value="P:pantothenate biosynthetic process"/>
    <property type="evidence" value="ECO:0007669"/>
    <property type="project" value="UniProtKB-UniRule"/>
</dbReference>
<dbReference type="CDD" id="cd00560">
    <property type="entry name" value="PanC"/>
    <property type="match status" value="1"/>
</dbReference>
<dbReference type="Gene3D" id="3.40.50.620">
    <property type="entry name" value="HUPs"/>
    <property type="match status" value="1"/>
</dbReference>
<dbReference type="Gene3D" id="3.30.1300.10">
    <property type="entry name" value="Pantoate-beta-alanine ligase, C-terminal domain"/>
    <property type="match status" value="1"/>
</dbReference>
<dbReference type="HAMAP" id="MF_00158">
    <property type="entry name" value="PanC"/>
    <property type="match status" value="1"/>
</dbReference>
<dbReference type="InterPro" id="IPR004821">
    <property type="entry name" value="Cyt_trans-like"/>
</dbReference>
<dbReference type="InterPro" id="IPR003721">
    <property type="entry name" value="Pantoate_ligase"/>
</dbReference>
<dbReference type="InterPro" id="IPR042176">
    <property type="entry name" value="Pantoate_ligase_C"/>
</dbReference>
<dbReference type="InterPro" id="IPR014729">
    <property type="entry name" value="Rossmann-like_a/b/a_fold"/>
</dbReference>
<dbReference type="NCBIfam" id="TIGR00125">
    <property type="entry name" value="cyt_tran_rel"/>
    <property type="match status" value="1"/>
</dbReference>
<dbReference type="NCBIfam" id="TIGR00018">
    <property type="entry name" value="panC"/>
    <property type="match status" value="1"/>
</dbReference>
<dbReference type="PANTHER" id="PTHR21299">
    <property type="entry name" value="CYTIDYLATE KINASE/PANTOATE-BETA-ALANINE LIGASE"/>
    <property type="match status" value="1"/>
</dbReference>
<dbReference type="PANTHER" id="PTHR21299:SF1">
    <property type="entry name" value="PANTOATE--BETA-ALANINE LIGASE"/>
    <property type="match status" value="1"/>
</dbReference>
<dbReference type="Pfam" id="PF02569">
    <property type="entry name" value="Pantoate_ligase"/>
    <property type="match status" value="1"/>
</dbReference>
<dbReference type="SUPFAM" id="SSF52374">
    <property type="entry name" value="Nucleotidylyl transferase"/>
    <property type="match status" value="1"/>
</dbReference>
<feature type="chain" id="PRO_0000305504" description="Pantothenate synthetase">
    <location>
        <begin position="1"/>
        <end position="282"/>
    </location>
</feature>
<feature type="active site" description="Proton donor" evidence="1">
    <location>
        <position position="39"/>
    </location>
</feature>
<feature type="binding site" evidence="1">
    <location>
        <begin position="32"/>
        <end position="39"/>
    </location>
    <ligand>
        <name>ATP</name>
        <dbReference type="ChEBI" id="CHEBI:30616"/>
    </ligand>
</feature>
<feature type="binding site" evidence="1">
    <location>
        <position position="63"/>
    </location>
    <ligand>
        <name>(R)-pantoate</name>
        <dbReference type="ChEBI" id="CHEBI:15980"/>
    </ligand>
</feature>
<feature type="binding site" evidence="1">
    <location>
        <position position="63"/>
    </location>
    <ligand>
        <name>beta-alanine</name>
        <dbReference type="ChEBI" id="CHEBI:57966"/>
    </ligand>
</feature>
<feature type="binding site" evidence="1">
    <location>
        <begin position="149"/>
        <end position="152"/>
    </location>
    <ligand>
        <name>ATP</name>
        <dbReference type="ChEBI" id="CHEBI:30616"/>
    </ligand>
</feature>
<feature type="binding site" evidence="1">
    <location>
        <position position="155"/>
    </location>
    <ligand>
        <name>(R)-pantoate</name>
        <dbReference type="ChEBI" id="CHEBI:15980"/>
    </ligand>
</feature>
<feature type="binding site" evidence="1">
    <location>
        <position position="178"/>
    </location>
    <ligand>
        <name>ATP</name>
        <dbReference type="ChEBI" id="CHEBI:30616"/>
    </ligand>
</feature>
<feature type="binding site" evidence="1">
    <location>
        <begin position="186"/>
        <end position="189"/>
    </location>
    <ligand>
        <name>ATP</name>
        <dbReference type="ChEBI" id="CHEBI:30616"/>
    </ligand>
</feature>
<protein>
    <recommendedName>
        <fullName evidence="1">Pantothenate synthetase</fullName>
        <shortName evidence="1">PS</shortName>
        <ecNumber evidence="1">6.3.2.1</ecNumber>
    </recommendedName>
    <alternativeName>
        <fullName evidence="1">Pantoate--beta-alanine ligase</fullName>
    </alternativeName>
    <alternativeName>
        <fullName evidence="1">Pantoate-activating enzyme</fullName>
    </alternativeName>
</protein>
<accession>A1B2L1</accession>
<reference key="1">
    <citation type="submission" date="2006-12" db="EMBL/GenBank/DDBJ databases">
        <title>Complete sequence of chromosome 1 of Paracoccus denitrificans PD1222.</title>
        <authorList>
            <person name="Copeland A."/>
            <person name="Lucas S."/>
            <person name="Lapidus A."/>
            <person name="Barry K."/>
            <person name="Detter J.C."/>
            <person name="Glavina del Rio T."/>
            <person name="Hammon N."/>
            <person name="Israni S."/>
            <person name="Dalin E."/>
            <person name="Tice H."/>
            <person name="Pitluck S."/>
            <person name="Munk A.C."/>
            <person name="Brettin T."/>
            <person name="Bruce D."/>
            <person name="Han C."/>
            <person name="Tapia R."/>
            <person name="Gilna P."/>
            <person name="Schmutz J."/>
            <person name="Larimer F."/>
            <person name="Land M."/>
            <person name="Hauser L."/>
            <person name="Kyrpides N."/>
            <person name="Lykidis A."/>
            <person name="Spiro S."/>
            <person name="Richardson D.J."/>
            <person name="Moir J.W.B."/>
            <person name="Ferguson S.J."/>
            <person name="van Spanning R.J.M."/>
            <person name="Richardson P."/>
        </authorList>
    </citation>
    <scope>NUCLEOTIDE SEQUENCE [LARGE SCALE GENOMIC DNA]</scope>
    <source>
        <strain>Pd 1222</strain>
    </source>
</reference>
<keyword id="KW-0067">ATP-binding</keyword>
<keyword id="KW-0963">Cytoplasm</keyword>
<keyword id="KW-0436">Ligase</keyword>
<keyword id="KW-0547">Nucleotide-binding</keyword>
<keyword id="KW-0566">Pantothenate biosynthesis</keyword>
<keyword id="KW-1185">Reference proteome</keyword>
<organism>
    <name type="scientific">Paracoccus denitrificans (strain Pd 1222)</name>
    <dbReference type="NCBI Taxonomy" id="318586"/>
    <lineage>
        <taxon>Bacteria</taxon>
        <taxon>Pseudomonadati</taxon>
        <taxon>Pseudomonadota</taxon>
        <taxon>Alphaproteobacteria</taxon>
        <taxon>Rhodobacterales</taxon>
        <taxon>Paracoccaceae</taxon>
        <taxon>Paracoccus</taxon>
    </lineage>
</organism>
<sequence length="282" mass="30473">MNAPIVRPLAELRSMVRGWKSRGETIGVVPTMGALHEGHLSLVRAARASCDRVIVTLFVNPRQFNNTEDYAKYPRTEHTDAALLAPLGVDALFVPDGDEVYPPDHATVISVSGVTAPLEGAHRPGHFDGVATVVTLLFNMTGADRAFFGEKDWQQLQLVRRLVQDLKLPVEIVPCPCVRAEDGLALSSRNQRLTAEGRTRAAALPRTLFEAARRIEAGAPTAEALAAAQEGLEAAGIGPVEYLELRDGETLGEPQLGRPARLLVAAWLDGVRLIDNVAVTLR</sequence>
<gene>
    <name evidence="1" type="primary">panC</name>
    <name type="ordered locus">Pden_1658</name>
</gene>
<proteinExistence type="inferred from homology"/>
<evidence type="ECO:0000255" key="1">
    <source>
        <dbReference type="HAMAP-Rule" id="MF_00158"/>
    </source>
</evidence>
<name>PANC_PARDP</name>